<keyword id="KW-0004">4Fe-4S</keyword>
<keyword id="KW-0408">Iron</keyword>
<keyword id="KW-0411">Iron-sulfur</keyword>
<keyword id="KW-0456">Lyase</keyword>
<keyword id="KW-0479">Metal-binding</keyword>
<keyword id="KW-1185">Reference proteome</keyword>
<keyword id="KW-0949">S-adenosyl-L-methionine</keyword>
<keyword id="KW-0784">Thiamine biosynthesis</keyword>
<keyword id="KW-0862">Zinc</keyword>
<dbReference type="EC" id="4.1.99.17" evidence="1"/>
<dbReference type="EMBL" id="CP000127">
    <property type="protein sequence ID" value="ABA59275.1"/>
    <property type="molecule type" value="Genomic_DNA"/>
</dbReference>
<dbReference type="RefSeq" id="WP_002812306.1">
    <property type="nucleotide sequence ID" value="NC_007484.1"/>
</dbReference>
<dbReference type="SMR" id="Q3J7C1"/>
<dbReference type="FunCoup" id="Q3J7C1">
    <property type="interactions" value="478"/>
</dbReference>
<dbReference type="STRING" id="323261.Noc_2828"/>
<dbReference type="KEGG" id="noc:Noc_2828"/>
<dbReference type="eggNOG" id="COG0422">
    <property type="taxonomic scope" value="Bacteria"/>
</dbReference>
<dbReference type="HOGENOM" id="CLU_013181_2_1_6"/>
<dbReference type="InParanoid" id="Q3J7C1"/>
<dbReference type="UniPathway" id="UPA00060"/>
<dbReference type="Proteomes" id="UP000006838">
    <property type="component" value="Chromosome"/>
</dbReference>
<dbReference type="GO" id="GO:0005829">
    <property type="term" value="C:cytosol"/>
    <property type="evidence" value="ECO:0007669"/>
    <property type="project" value="TreeGrafter"/>
</dbReference>
<dbReference type="GO" id="GO:0051539">
    <property type="term" value="F:4 iron, 4 sulfur cluster binding"/>
    <property type="evidence" value="ECO:0007669"/>
    <property type="project" value="UniProtKB-KW"/>
</dbReference>
<dbReference type="GO" id="GO:0016830">
    <property type="term" value="F:carbon-carbon lyase activity"/>
    <property type="evidence" value="ECO:0007669"/>
    <property type="project" value="InterPro"/>
</dbReference>
<dbReference type="GO" id="GO:0008270">
    <property type="term" value="F:zinc ion binding"/>
    <property type="evidence" value="ECO:0007669"/>
    <property type="project" value="UniProtKB-UniRule"/>
</dbReference>
<dbReference type="GO" id="GO:0009228">
    <property type="term" value="P:thiamine biosynthetic process"/>
    <property type="evidence" value="ECO:0007669"/>
    <property type="project" value="UniProtKB-KW"/>
</dbReference>
<dbReference type="GO" id="GO:0009229">
    <property type="term" value="P:thiamine diphosphate biosynthetic process"/>
    <property type="evidence" value="ECO:0007669"/>
    <property type="project" value="UniProtKB-UniRule"/>
</dbReference>
<dbReference type="FunFam" id="3.20.20.540:FF:000001">
    <property type="entry name" value="Phosphomethylpyrimidine synthase"/>
    <property type="match status" value="1"/>
</dbReference>
<dbReference type="Gene3D" id="6.10.250.620">
    <property type="match status" value="1"/>
</dbReference>
<dbReference type="Gene3D" id="3.20.20.540">
    <property type="entry name" value="Radical SAM ThiC family, central domain"/>
    <property type="match status" value="1"/>
</dbReference>
<dbReference type="HAMAP" id="MF_00089">
    <property type="entry name" value="ThiC"/>
    <property type="match status" value="1"/>
</dbReference>
<dbReference type="InterPro" id="IPR037509">
    <property type="entry name" value="ThiC"/>
</dbReference>
<dbReference type="InterPro" id="IPR025747">
    <property type="entry name" value="ThiC-associated_dom"/>
</dbReference>
<dbReference type="InterPro" id="IPR038521">
    <property type="entry name" value="ThiC/Bza_core_dom"/>
</dbReference>
<dbReference type="InterPro" id="IPR002817">
    <property type="entry name" value="ThiC/BzaA/B"/>
</dbReference>
<dbReference type="NCBIfam" id="NF006763">
    <property type="entry name" value="PRK09284.1"/>
    <property type="match status" value="1"/>
</dbReference>
<dbReference type="NCBIfam" id="NF009895">
    <property type="entry name" value="PRK13352.1"/>
    <property type="match status" value="1"/>
</dbReference>
<dbReference type="NCBIfam" id="TIGR00190">
    <property type="entry name" value="thiC"/>
    <property type="match status" value="1"/>
</dbReference>
<dbReference type="PANTHER" id="PTHR30557:SF1">
    <property type="entry name" value="PHOSPHOMETHYLPYRIMIDINE SYNTHASE, CHLOROPLASTIC"/>
    <property type="match status" value="1"/>
</dbReference>
<dbReference type="PANTHER" id="PTHR30557">
    <property type="entry name" value="THIAMINE BIOSYNTHESIS PROTEIN THIC"/>
    <property type="match status" value="1"/>
</dbReference>
<dbReference type="Pfam" id="PF13667">
    <property type="entry name" value="ThiC-associated"/>
    <property type="match status" value="1"/>
</dbReference>
<dbReference type="Pfam" id="PF01964">
    <property type="entry name" value="ThiC_Rad_SAM"/>
    <property type="match status" value="1"/>
</dbReference>
<dbReference type="SFLD" id="SFLDF00407">
    <property type="entry name" value="phosphomethylpyrimidine_syntha"/>
    <property type="match status" value="1"/>
</dbReference>
<dbReference type="SFLD" id="SFLDG01114">
    <property type="entry name" value="phosphomethylpyrimidine_syntha"/>
    <property type="match status" value="1"/>
</dbReference>
<dbReference type="SFLD" id="SFLDS00113">
    <property type="entry name" value="Radical_SAM_Phosphomethylpyrim"/>
    <property type="match status" value="1"/>
</dbReference>
<sequence>MSAIPEEFLSTQAQVDEQAIQPFPNSRKIHVAGSRPDIRVPMREITLSDTHTSQGREKNPPLTVYDTSGPYTDPEAKIDIRQGLSELRRNWIEERADTEILSDLSSQYGRQRNADSKLDSLRFAHLRPPRRAKAGHNVSQMHYARQGIITPEMEFIAIRENQRLEQYREQLAQHHPGQSFGAHLPSRLTPEFVRSEVARGRAIIPANINHTELEPMIIGRNFLVKINANIGNSAVTSSIAEEVDKMTWAIRWGADTVMDLSTGKNIHETREWIVRNSPVPIGTVPIYQALEKVGGKAEELTWEIFRDTLIEQAEQGVDYFTIHAGVRLAYVPLTAKRLTGIVSRGGSIMAKWCLAHHTESFLYTHFEEICEIMKAYDVSFSLGDGLRPGSLADANDAAQFAELETLGELTEIAWKHDVQTMIEGPGHVPMHLIKENMDKQLACCGEAPFYTLGPLTTDIAPGYDHITSGIGAAMIGWYGTAMLCYVTPKEHLGLPNKNDVKEGIITYKIAAHAADLAKGHPSAQIRDNAMSKARFEFRWEDQFNIGLDPDQAREYHDETLPKDSAKVAHFCSMCGPQFCSMKISQDVREYAKQKGLKHHTALEQGMAEKAQEFREKGAEIYHET</sequence>
<gene>
    <name evidence="1" type="primary">thiC</name>
    <name type="ordered locus">Noc_2828</name>
</gene>
<evidence type="ECO:0000255" key="1">
    <source>
        <dbReference type="HAMAP-Rule" id="MF_00089"/>
    </source>
</evidence>
<evidence type="ECO:0000256" key="2">
    <source>
        <dbReference type="SAM" id="MobiDB-lite"/>
    </source>
</evidence>
<comment type="function">
    <text evidence="1">Catalyzes the synthesis of the hydroxymethylpyrimidine phosphate (HMP-P) moiety of thiamine from aminoimidazole ribotide (AIR) in a radical S-adenosyl-L-methionine (SAM)-dependent reaction.</text>
</comment>
<comment type="catalytic activity">
    <reaction evidence="1">
        <text>5-amino-1-(5-phospho-beta-D-ribosyl)imidazole + S-adenosyl-L-methionine = 4-amino-2-methyl-5-(phosphooxymethyl)pyrimidine + CO + 5'-deoxyadenosine + formate + L-methionine + 3 H(+)</text>
        <dbReference type="Rhea" id="RHEA:24840"/>
        <dbReference type="ChEBI" id="CHEBI:15378"/>
        <dbReference type="ChEBI" id="CHEBI:15740"/>
        <dbReference type="ChEBI" id="CHEBI:17245"/>
        <dbReference type="ChEBI" id="CHEBI:17319"/>
        <dbReference type="ChEBI" id="CHEBI:57844"/>
        <dbReference type="ChEBI" id="CHEBI:58354"/>
        <dbReference type="ChEBI" id="CHEBI:59789"/>
        <dbReference type="ChEBI" id="CHEBI:137981"/>
        <dbReference type="EC" id="4.1.99.17"/>
    </reaction>
</comment>
<comment type="cofactor">
    <cofactor evidence="1">
        <name>[4Fe-4S] cluster</name>
        <dbReference type="ChEBI" id="CHEBI:49883"/>
    </cofactor>
    <text evidence="1">Binds 1 [4Fe-4S] cluster per subunit. The cluster is coordinated with 3 cysteines and an exchangeable S-adenosyl-L-methionine.</text>
</comment>
<comment type="pathway">
    <text evidence="1">Cofactor biosynthesis; thiamine diphosphate biosynthesis.</text>
</comment>
<comment type="subunit">
    <text evidence="1">Homodimer.</text>
</comment>
<comment type="similarity">
    <text evidence="1">Belongs to the ThiC family.</text>
</comment>
<reference key="1">
    <citation type="journal article" date="2006" name="Appl. Environ. Microbiol.">
        <title>Complete genome sequence of the marine, chemolithoautotrophic, ammonia-oxidizing bacterium Nitrosococcus oceani ATCC 19707.</title>
        <authorList>
            <person name="Klotz M.G."/>
            <person name="Arp D.J."/>
            <person name="Chain P.S.G."/>
            <person name="El-Sheikh A.F."/>
            <person name="Hauser L.J."/>
            <person name="Hommes N.G."/>
            <person name="Larimer F.W."/>
            <person name="Malfatti S.A."/>
            <person name="Norton J.M."/>
            <person name="Poret-Peterson A.T."/>
            <person name="Vergez L.M."/>
            <person name="Ward B.B."/>
        </authorList>
    </citation>
    <scope>NUCLEOTIDE SEQUENCE [LARGE SCALE GENOMIC DNA]</scope>
    <source>
        <strain>ATCC 19707 / BCRC 17464 / JCM 30415 / NCIMB 11848 / C-107</strain>
    </source>
</reference>
<protein>
    <recommendedName>
        <fullName evidence="1">Phosphomethylpyrimidine synthase</fullName>
        <ecNumber evidence="1">4.1.99.17</ecNumber>
    </recommendedName>
    <alternativeName>
        <fullName evidence="1">Hydroxymethylpyrimidine phosphate synthase</fullName>
        <shortName evidence="1">HMP-P synthase</shortName>
        <shortName evidence="1">HMP-phosphate synthase</shortName>
        <shortName evidence="1">HMPP synthase</shortName>
    </alternativeName>
    <alternativeName>
        <fullName evidence="1">Thiamine biosynthesis protein ThiC</fullName>
    </alternativeName>
</protein>
<organism>
    <name type="scientific">Nitrosococcus oceani (strain ATCC 19707 / BCRC 17464 / JCM 30415 / NCIMB 11848 / C-107)</name>
    <dbReference type="NCBI Taxonomy" id="323261"/>
    <lineage>
        <taxon>Bacteria</taxon>
        <taxon>Pseudomonadati</taxon>
        <taxon>Pseudomonadota</taxon>
        <taxon>Gammaproteobacteria</taxon>
        <taxon>Chromatiales</taxon>
        <taxon>Chromatiaceae</taxon>
        <taxon>Nitrosococcus</taxon>
    </lineage>
</organism>
<name>THIC_NITOC</name>
<accession>Q3J7C1</accession>
<proteinExistence type="inferred from homology"/>
<feature type="chain" id="PRO_0000242277" description="Phosphomethylpyrimidine synthase">
    <location>
        <begin position="1"/>
        <end position="624"/>
    </location>
</feature>
<feature type="region of interest" description="Disordered" evidence="2">
    <location>
        <begin position="48"/>
        <end position="70"/>
    </location>
</feature>
<feature type="binding site" evidence="1">
    <location>
        <position position="229"/>
    </location>
    <ligand>
        <name>substrate</name>
    </ligand>
</feature>
<feature type="binding site" evidence="1">
    <location>
        <position position="258"/>
    </location>
    <ligand>
        <name>substrate</name>
    </ligand>
</feature>
<feature type="binding site" evidence="1">
    <location>
        <position position="287"/>
    </location>
    <ligand>
        <name>substrate</name>
    </ligand>
</feature>
<feature type="binding site" evidence="1">
    <location>
        <position position="323"/>
    </location>
    <ligand>
        <name>substrate</name>
    </ligand>
</feature>
<feature type="binding site" evidence="1">
    <location>
        <begin position="343"/>
        <end position="345"/>
    </location>
    <ligand>
        <name>substrate</name>
    </ligand>
</feature>
<feature type="binding site" evidence="1">
    <location>
        <begin position="384"/>
        <end position="387"/>
    </location>
    <ligand>
        <name>substrate</name>
    </ligand>
</feature>
<feature type="binding site" evidence="1">
    <location>
        <position position="423"/>
    </location>
    <ligand>
        <name>substrate</name>
    </ligand>
</feature>
<feature type="binding site" evidence="1">
    <location>
        <position position="427"/>
    </location>
    <ligand>
        <name>Zn(2+)</name>
        <dbReference type="ChEBI" id="CHEBI:29105"/>
    </ligand>
</feature>
<feature type="binding site" evidence="1">
    <location>
        <position position="450"/>
    </location>
    <ligand>
        <name>substrate</name>
    </ligand>
</feature>
<feature type="binding site" evidence="1">
    <location>
        <position position="491"/>
    </location>
    <ligand>
        <name>Zn(2+)</name>
        <dbReference type="ChEBI" id="CHEBI:29105"/>
    </ligand>
</feature>
<feature type="binding site" evidence="1">
    <location>
        <position position="571"/>
    </location>
    <ligand>
        <name>[4Fe-4S] cluster</name>
        <dbReference type="ChEBI" id="CHEBI:49883"/>
        <note>4Fe-4S-S-AdoMet</note>
    </ligand>
</feature>
<feature type="binding site" evidence="1">
    <location>
        <position position="574"/>
    </location>
    <ligand>
        <name>[4Fe-4S] cluster</name>
        <dbReference type="ChEBI" id="CHEBI:49883"/>
        <note>4Fe-4S-S-AdoMet</note>
    </ligand>
</feature>
<feature type="binding site" evidence="1">
    <location>
        <position position="579"/>
    </location>
    <ligand>
        <name>[4Fe-4S] cluster</name>
        <dbReference type="ChEBI" id="CHEBI:49883"/>
        <note>4Fe-4S-S-AdoMet</note>
    </ligand>
</feature>